<organism>
    <name type="scientific">Arabidopsis thaliana</name>
    <name type="common">Mouse-ear cress</name>
    <dbReference type="NCBI Taxonomy" id="3702"/>
    <lineage>
        <taxon>Eukaryota</taxon>
        <taxon>Viridiplantae</taxon>
        <taxon>Streptophyta</taxon>
        <taxon>Embryophyta</taxon>
        <taxon>Tracheophyta</taxon>
        <taxon>Spermatophyta</taxon>
        <taxon>Magnoliopsida</taxon>
        <taxon>eudicotyledons</taxon>
        <taxon>Gunneridae</taxon>
        <taxon>Pentapetalae</taxon>
        <taxon>rosids</taxon>
        <taxon>malvids</taxon>
        <taxon>Brassicales</taxon>
        <taxon>Brassicaceae</taxon>
        <taxon>Camelineae</taxon>
        <taxon>Arabidopsis</taxon>
    </lineage>
</organism>
<dbReference type="EMBL" id="CP002685">
    <property type="protein sequence ID" value="AEC09457.1"/>
    <property type="molecule type" value="Genomic_DNA"/>
</dbReference>
<dbReference type="EMBL" id="CP002685">
    <property type="protein sequence ID" value="AEC09458.1"/>
    <property type="molecule type" value="Genomic_DNA"/>
</dbReference>
<dbReference type="EMBL" id="CP002685">
    <property type="protein sequence ID" value="AEC09459.1"/>
    <property type="molecule type" value="Genomic_DNA"/>
</dbReference>
<dbReference type="EMBL" id="CP002685">
    <property type="protein sequence ID" value="ANM61867.1"/>
    <property type="molecule type" value="Genomic_DNA"/>
</dbReference>
<dbReference type="EMBL" id="AY081345">
    <property type="protein sequence ID" value="AAL91234.1"/>
    <property type="molecule type" value="mRNA"/>
</dbReference>
<dbReference type="EMBL" id="BT002153">
    <property type="protein sequence ID" value="AAN72164.1"/>
    <property type="molecule type" value="mRNA"/>
</dbReference>
<dbReference type="EMBL" id="AK316808">
    <property type="protein sequence ID" value="BAH19522.1"/>
    <property type="molecule type" value="mRNA"/>
</dbReference>
<dbReference type="EMBL" id="AK318956">
    <property type="protein sequence ID" value="BAH57071.1"/>
    <property type="molecule type" value="mRNA"/>
</dbReference>
<dbReference type="RefSeq" id="NP_001031506.1">
    <molecule id="B9DFK5-1"/>
    <property type="nucleotide sequence ID" value="NM_001036429.2"/>
</dbReference>
<dbReference type="RefSeq" id="NP_001324059.1">
    <molecule id="B9DFK5-1"/>
    <property type="nucleotide sequence ID" value="NM_001336677.1"/>
</dbReference>
<dbReference type="RefSeq" id="NP_850287.1">
    <molecule id="B9DFK5-2"/>
    <property type="nucleotide sequence ID" value="NM_179956.2"/>
</dbReference>
<dbReference type="RefSeq" id="NP_850288.2">
    <molecule id="B9DFK5-2"/>
    <property type="nucleotide sequence ID" value="NM_179957.3"/>
</dbReference>
<dbReference type="SMR" id="B9DFK5"/>
<dbReference type="FunCoup" id="B9DFK5">
    <property type="interactions" value="530"/>
</dbReference>
<dbReference type="STRING" id="3702.B9DFK5"/>
<dbReference type="PaxDb" id="3702-AT2G37860.3"/>
<dbReference type="ProteomicsDB" id="234673">
    <molecule id="B9DFK5-1"/>
</dbReference>
<dbReference type="EnsemblPlants" id="AT2G37860.1">
    <molecule id="B9DFK5-2"/>
    <property type="protein sequence ID" value="AT2G37860.1"/>
    <property type="gene ID" value="AT2G37860"/>
</dbReference>
<dbReference type="EnsemblPlants" id="AT2G37860.2">
    <molecule id="B9DFK5-2"/>
    <property type="protein sequence ID" value="AT2G37860.2"/>
    <property type="gene ID" value="AT2G37860"/>
</dbReference>
<dbReference type="EnsemblPlants" id="AT2G37860.3">
    <molecule id="B9DFK5-1"/>
    <property type="protein sequence ID" value="AT2G37860.3"/>
    <property type="gene ID" value="AT2G37860"/>
</dbReference>
<dbReference type="EnsemblPlants" id="AT2G37860.4">
    <molecule id="B9DFK5-1"/>
    <property type="protein sequence ID" value="AT2G37860.4"/>
    <property type="gene ID" value="AT2G37860"/>
</dbReference>
<dbReference type="GeneID" id="818362"/>
<dbReference type="Gramene" id="AT2G37860.1">
    <molecule id="B9DFK5-2"/>
    <property type="protein sequence ID" value="AT2G37860.1"/>
    <property type="gene ID" value="AT2G37860"/>
</dbReference>
<dbReference type="Gramene" id="AT2G37860.2">
    <molecule id="B9DFK5-2"/>
    <property type="protein sequence ID" value="AT2G37860.2"/>
    <property type="gene ID" value="AT2G37860"/>
</dbReference>
<dbReference type="Gramene" id="AT2G37860.3">
    <molecule id="B9DFK5-1"/>
    <property type="protein sequence ID" value="AT2G37860.3"/>
    <property type="gene ID" value="AT2G37860"/>
</dbReference>
<dbReference type="Gramene" id="AT2G37860.4">
    <molecule id="B9DFK5-1"/>
    <property type="protein sequence ID" value="AT2G37860.4"/>
    <property type="gene ID" value="AT2G37860"/>
</dbReference>
<dbReference type="KEGG" id="ath:AT2G37860"/>
<dbReference type="Araport" id="AT2G37860"/>
<dbReference type="TAIR" id="AT2G37860">
    <property type="gene designation" value="LCD1"/>
</dbReference>
<dbReference type="eggNOG" id="ENOG502QPQK">
    <property type="taxonomic scope" value="Eukaryota"/>
</dbReference>
<dbReference type="HOGENOM" id="CLU_036961_1_0_1"/>
<dbReference type="InParanoid" id="B9DFK5"/>
<dbReference type="OMA" id="GAAMKSC"/>
<dbReference type="PhylomeDB" id="B9DFK5"/>
<dbReference type="PRO" id="PR:B9DFK5"/>
<dbReference type="Proteomes" id="UP000006548">
    <property type="component" value="Chromosome 2"/>
</dbReference>
<dbReference type="ExpressionAtlas" id="B9DFK5">
    <property type="expression patterns" value="baseline and differential"/>
</dbReference>
<dbReference type="GO" id="GO:0009507">
    <property type="term" value="C:chloroplast"/>
    <property type="evidence" value="ECO:0007005"/>
    <property type="project" value="TAIR"/>
</dbReference>
<dbReference type="GO" id="GO:0009941">
    <property type="term" value="C:chloroplast envelope"/>
    <property type="evidence" value="ECO:0007005"/>
    <property type="project" value="TAIR"/>
</dbReference>
<dbReference type="GO" id="GO:0031969">
    <property type="term" value="C:chloroplast membrane"/>
    <property type="evidence" value="ECO:0007669"/>
    <property type="project" value="UniProtKB-SubCell"/>
</dbReference>
<dbReference type="GO" id="GO:0005783">
    <property type="term" value="C:endoplasmic reticulum"/>
    <property type="evidence" value="ECO:0007005"/>
    <property type="project" value="TAIR"/>
</dbReference>
<dbReference type="GO" id="GO:0009536">
    <property type="term" value="C:plastid"/>
    <property type="evidence" value="ECO:0007005"/>
    <property type="project" value="TAIR"/>
</dbReference>
<dbReference type="GO" id="GO:0009658">
    <property type="term" value="P:chloroplast organization"/>
    <property type="evidence" value="ECO:0000315"/>
    <property type="project" value="TAIR"/>
</dbReference>
<dbReference type="GO" id="GO:0048366">
    <property type="term" value="P:leaf development"/>
    <property type="evidence" value="ECO:0000315"/>
    <property type="project" value="TAIR"/>
</dbReference>
<dbReference type="GO" id="GO:0009648">
    <property type="term" value="P:photoperiodism"/>
    <property type="evidence" value="ECO:0000315"/>
    <property type="project" value="TAIR"/>
</dbReference>
<dbReference type="GO" id="GO:0000302">
    <property type="term" value="P:response to reactive oxygen species"/>
    <property type="evidence" value="ECO:0000315"/>
    <property type="project" value="TAIR"/>
</dbReference>
<dbReference type="InterPro" id="IPR021825">
    <property type="entry name" value="RETICULATA-related"/>
</dbReference>
<dbReference type="PANTHER" id="PTHR31038">
    <property type="entry name" value="EXPRESSED PROTEIN-RELATED"/>
    <property type="match status" value="1"/>
</dbReference>
<dbReference type="PANTHER" id="PTHR31038:SF19">
    <property type="entry name" value="PROTEIN RETICULATA, CHLOROPLASTIC"/>
    <property type="match status" value="1"/>
</dbReference>
<dbReference type="Pfam" id="PF11891">
    <property type="entry name" value="RETICULATA-like"/>
    <property type="match status" value="1"/>
</dbReference>
<name>RETIC_ARATH</name>
<keyword id="KW-0025">Alternative splicing</keyword>
<keyword id="KW-0150">Chloroplast</keyword>
<keyword id="KW-0217">Developmental protein</keyword>
<keyword id="KW-0472">Membrane</keyword>
<keyword id="KW-0934">Plastid</keyword>
<keyword id="KW-1185">Reference proteome</keyword>
<keyword id="KW-0809">Transit peptide</keyword>
<keyword id="KW-0812">Transmembrane</keyword>
<keyword id="KW-1133">Transmembrane helix</keyword>
<reference key="1">
    <citation type="journal article" date="1999" name="Nature">
        <title>Sequence and analysis of chromosome 2 of the plant Arabidopsis thaliana.</title>
        <authorList>
            <person name="Lin X."/>
            <person name="Kaul S."/>
            <person name="Rounsley S.D."/>
            <person name="Shea T.P."/>
            <person name="Benito M.-I."/>
            <person name="Town C.D."/>
            <person name="Fujii C.Y."/>
            <person name="Mason T.M."/>
            <person name="Bowman C.L."/>
            <person name="Barnstead M.E."/>
            <person name="Feldblyum T.V."/>
            <person name="Buell C.R."/>
            <person name="Ketchum K.A."/>
            <person name="Lee J.J."/>
            <person name="Ronning C.M."/>
            <person name="Koo H.L."/>
            <person name="Moffat K.S."/>
            <person name="Cronin L.A."/>
            <person name="Shen M."/>
            <person name="Pai G."/>
            <person name="Van Aken S."/>
            <person name="Umayam L."/>
            <person name="Tallon L.J."/>
            <person name="Gill J.E."/>
            <person name="Adams M.D."/>
            <person name="Carrera A.J."/>
            <person name="Creasy T.H."/>
            <person name="Goodman H.M."/>
            <person name="Somerville C.R."/>
            <person name="Copenhaver G.P."/>
            <person name="Preuss D."/>
            <person name="Nierman W.C."/>
            <person name="White O."/>
            <person name="Eisen J.A."/>
            <person name="Salzberg S.L."/>
            <person name="Fraser C.M."/>
            <person name="Venter J.C."/>
        </authorList>
    </citation>
    <scope>NUCLEOTIDE SEQUENCE [LARGE SCALE GENOMIC DNA]</scope>
    <source>
        <strain>cv. Columbia</strain>
    </source>
</reference>
<reference key="2">
    <citation type="journal article" date="2017" name="Plant J.">
        <title>Araport11: a complete reannotation of the Arabidopsis thaliana reference genome.</title>
        <authorList>
            <person name="Cheng C.Y."/>
            <person name="Krishnakumar V."/>
            <person name="Chan A.P."/>
            <person name="Thibaud-Nissen F."/>
            <person name="Schobel S."/>
            <person name="Town C.D."/>
        </authorList>
    </citation>
    <scope>GENOME REANNOTATION</scope>
    <source>
        <strain>cv. Columbia</strain>
    </source>
</reference>
<reference key="3">
    <citation type="journal article" date="2003" name="Science">
        <title>Empirical analysis of transcriptional activity in the Arabidopsis genome.</title>
        <authorList>
            <person name="Yamada K."/>
            <person name="Lim J."/>
            <person name="Dale J.M."/>
            <person name="Chen H."/>
            <person name="Shinn P."/>
            <person name="Palm C.J."/>
            <person name="Southwick A.M."/>
            <person name="Wu H.C."/>
            <person name="Kim C.J."/>
            <person name="Nguyen M."/>
            <person name="Pham P.K."/>
            <person name="Cheuk R.F."/>
            <person name="Karlin-Newmann G."/>
            <person name="Liu S.X."/>
            <person name="Lam B."/>
            <person name="Sakano H."/>
            <person name="Wu T."/>
            <person name="Yu G."/>
            <person name="Miranda M."/>
            <person name="Quach H.L."/>
            <person name="Tripp M."/>
            <person name="Chang C.H."/>
            <person name="Lee J.M."/>
            <person name="Toriumi M.J."/>
            <person name="Chan M.M."/>
            <person name="Tang C.C."/>
            <person name="Onodera C.S."/>
            <person name="Deng J.M."/>
            <person name="Akiyama K."/>
            <person name="Ansari Y."/>
            <person name="Arakawa T."/>
            <person name="Banh J."/>
            <person name="Banno F."/>
            <person name="Bowser L."/>
            <person name="Brooks S.Y."/>
            <person name="Carninci P."/>
            <person name="Chao Q."/>
            <person name="Choy N."/>
            <person name="Enju A."/>
            <person name="Goldsmith A.D."/>
            <person name="Gurjal M."/>
            <person name="Hansen N.F."/>
            <person name="Hayashizaki Y."/>
            <person name="Johnson-Hopson C."/>
            <person name="Hsuan V.W."/>
            <person name="Iida K."/>
            <person name="Karnes M."/>
            <person name="Khan S."/>
            <person name="Koesema E."/>
            <person name="Ishida J."/>
            <person name="Jiang P.X."/>
            <person name="Jones T."/>
            <person name="Kawai J."/>
            <person name="Kamiya A."/>
            <person name="Meyers C."/>
            <person name="Nakajima M."/>
            <person name="Narusaka M."/>
            <person name="Seki M."/>
            <person name="Sakurai T."/>
            <person name="Satou M."/>
            <person name="Tamse R."/>
            <person name="Vaysberg M."/>
            <person name="Wallender E.K."/>
            <person name="Wong C."/>
            <person name="Yamamura Y."/>
            <person name="Yuan S."/>
            <person name="Shinozaki K."/>
            <person name="Davis R.W."/>
            <person name="Theologis A."/>
            <person name="Ecker J.R."/>
        </authorList>
    </citation>
    <scope>NUCLEOTIDE SEQUENCE [LARGE SCALE MRNA] (ISOFORM 2)</scope>
    <source>
        <strain>cv. Columbia</strain>
    </source>
</reference>
<reference key="4">
    <citation type="journal article" date="2009" name="DNA Res.">
        <title>Analysis of multiple occurrences of alternative splicing events in Arabidopsis thaliana using novel sequenced full-length cDNAs.</title>
        <authorList>
            <person name="Iida K."/>
            <person name="Fukami-Kobayashi K."/>
            <person name="Toyoda A."/>
            <person name="Sakaki Y."/>
            <person name="Kobayashi M."/>
            <person name="Seki M."/>
            <person name="Shinozaki K."/>
        </authorList>
    </citation>
    <scope>NUCLEOTIDE SEQUENCE [LARGE SCALE MRNA] (ISOFORM 1)</scope>
    <source>
        <strain>cv. Columbia</strain>
    </source>
</reference>
<reference key="5">
    <citation type="journal article" date="2003" name="Plant J.">
        <title>The lower cell density of leaf parenchyma in the Arabidopsis thaliana mutant lcd1-1 is associated with increased sensitivity to ozone and virulent Pseudomonas syringae.</title>
        <authorList>
            <person name="Barth C."/>
            <person name="Conklin P.L."/>
        </authorList>
    </citation>
    <scope>FUNCTION</scope>
    <scope>DISRUPTION PHENOTYPE</scope>
</reference>
<reference key="6">
    <citation type="journal article" date="2006" name="J. Exp. Bot.">
        <title>Mutations in the RETICULATA gene dramatically alter internal architecture but have little effect on overall organ shape in Arabidopsis leaves.</title>
        <authorList>
            <person name="Gonzalez-Bayon R."/>
            <person name="Kinsman E.A."/>
            <person name="Quesada V."/>
            <person name="Vera A."/>
            <person name="Robles P."/>
            <person name="Ponce M.R."/>
            <person name="Pyke K.A."/>
            <person name="Micol J.L."/>
        </authorList>
    </citation>
    <scope>FUNCTION</scope>
    <scope>TISSUE SPECIFICITY</scope>
    <scope>DISRUPTION PHENOTYPE</scope>
    <scope>MUTAGENESIS OF PRO-295 AND GLY-328</scope>
</reference>
<reference key="7">
    <citation type="journal article" date="2013" name="Plant Physiol.">
        <title>Functional redundancy and divergence within the Arabidopsis RETICULATA-RELATED gene family.</title>
        <authorList>
            <person name="Perez-Perez J.M."/>
            <person name="Esteve-Bruna D."/>
            <person name="Gonzalez-Bayon R."/>
            <person name="Kangasjarvi S."/>
            <person name="Caldana C."/>
            <person name="Hannah M.A."/>
            <person name="Willmitzer L."/>
            <person name="Ponce M.R."/>
            <person name="Micol J.L."/>
        </authorList>
    </citation>
    <scope>FUNCTION</scope>
    <scope>DEVELOPMENTAL STAGE</scope>
    <scope>GENE FAMILY</scope>
    <scope>NOMENCLATURE</scope>
    <scope>DISRUPTION PHENOTYPE</scope>
</reference>
<gene>
    <name evidence="8" type="primary">RE</name>
    <name evidence="7" type="synonym">LCD1</name>
    <name evidence="10" type="ordered locus">At2g37860</name>
</gene>
<proteinExistence type="evidence at protein level"/>
<comment type="function">
    <text evidence="4 5">May play a role in leaf development. Required for leaf mesophyll cell division in the early stages of leaf organogenesis (PubMed:12848826, PubMed:16873448). Acts in a developmental pathway that involves PPT1/CUE1 but does not include ASE2/DOV1 (PubMed:16873448).</text>
</comment>
<comment type="subcellular location">
    <subcellularLocation>
        <location evidence="1">Plastid</location>
        <location evidence="1">Chloroplast membrane</location>
        <topology evidence="2">Multi-pass membrane protein</topology>
    </subcellularLocation>
</comment>
<comment type="alternative products">
    <event type="alternative splicing"/>
    <isoform>
        <id>B9DFK5-1</id>
        <name>1</name>
        <sequence type="displayed"/>
    </isoform>
    <isoform>
        <id>B9DFK5-2</id>
        <name>2</name>
        <sequence type="described" ref="VSP_057777"/>
    </isoform>
</comment>
<comment type="tissue specificity">
    <text evidence="5">Highly expressed in the vasculature of developing leaf primordia, margins of fully expanded leaves, hydathodes of rosette of cauline leaves, basal region of the lamina, stipules, root tips, stamens and in the abscission zone of the funiculus.</text>
</comment>
<comment type="developmental stage">
    <text evidence="6">During embryo development, expressed from torpedo stage onwards.</text>
</comment>
<comment type="disruption phenotype">
    <text evidence="4 5">Pale interveinal phenotype due to marked reduction in the density of mesophyll cells in interveinal regions of leaves (PubMed:12848826, PubMed:16873448). Increased sensitivity to ozone and a virulent strain of the bacterial pathogen Pseudomonas syringae pv. maculicola (PubMed:12848826).</text>
</comment>
<comment type="similarity">
    <text evidence="9">Belongs to the RETICULATA family.</text>
</comment>
<sequence length="432" mass="46629">MAGCAMNLQFSSVVKVRNEISSFGICNRDFVFRDLAKAMKVPVLRIRGGSGRQRSRLFVVNMSQSPIEPQSGGFAATEQIKGEGDNSILGKDNVRNLGTDQLENLDIDGNVGDGFNGSDGNGGGGGGGNGGEGDGEGEDYEEKEFGPILKFEEVMKETEARGATLPSDMLEAAKNYGIRKVLLLRYLDLQSSAGLLGFAIRSWAMLRNRMLADPSFLFKIGAEIVIDSCCATVAEVQKRGKDFWAEFELYVADLLVGTVVNIALVGMLAPYVRFGQPSASPGFLGRMVFAYNALPSSVFEAERPGCRFSAQQRLATYFYKGIMYGAVGFGCGIVGQGIANLIMTAKRNINKSEENIPVPPLIKSAALWGVFLSVSSNTRYQIINGLERVVEASPFAKKFPPAAMAFTVGVRLANNIYGGMQFVDWARLSGCQ</sequence>
<protein>
    <recommendedName>
        <fullName evidence="8">Protein RETICULATA, chloroplastic</fullName>
    </recommendedName>
    <alternativeName>
        <fullName evidence="7">Protein LOWER CELL DENSITY 1</fullName>
    </alternativeName>
</protein>
<evidence type="ECO:0000250" key="1">
    <source>
        <dbReference type="UniProtKB" id="Q9C9Z2"/>
    </source>
</evidence>
<evidence type="ECO:0000255" key="2"/>
<evidence type="ECO:0000256" key="3">
    <source>
        <dbReference type="SAM" id="MobiDB-lite"/>
    </source>
</evidence>
<evidence type="ECO:0000269" key="4">
    <source>
    </source>
</evidence>
<evidence type="ECO:0000269" key="5">
    <source>
    </source>
</evidence>
<evidence type="ECO:0000269" key="6">
    <source>
    </source>
</evidence>
<evidence type="ECO:0000303" key="7">
    <source>
    </source>
</evidence>
<evidence type="ECO:0000303" key="8">
    <source>
    </source>
</evidence>
<evidence type="ECO:0000305" key="9"/>
<evidence type="ECO:0000312" key="10">
    <source>
        <dbReference type="Araport" id="AT2G37860"/>
    </source>
</evidence>
<accession>B9DFK5</accession>
<accession>C0Z2Z2</accession>
<accession>Q8RXC6</accession>
<feature type="transit peptide" description="Chloroplast" evidence="2">
    <location>
        <begin position="1"/>
        <end position="47"/>
    </location>
</feature>
<feature type="chain" id="PRO_0000433439" description="Protein RETICULATA, chloroplastic" evidence="2">
    <location>
        <begin position="48"/>
        <end position="432"/>
    </location>
</feature>
<feature type="transmembrane region" description="Helical" evidence="2">
    <location>
        <begin position="249"/>
        <end position="269"/>
    </location>
</feature>
<feature type="transmembrane region" description="Helical" evidence="2">
    <location>
        <begin position="322"/>
        <end position="342"/>
    </location>
</feature>
<feature type="region of interest" description="Disordered" evidence="3">
    <location>
        <begin position="109"/>
        <end position="140"/>
    </location>
</feature>
<feature type="compositionally biased region" description="Gly residues" evidence="3">
    <location>
        <begin position="111"/>
        <end position="132"/>
    </location>
</feature>
<feature type="splice variant" id="VSP_057777" description="In isoform 2.">
    <location>
        <begin position="348"/>
        <end position="432"/>
    </location>
</feature>
<feature type="mutagenesis site" description="In re-4; pale interveinal phenotype." evidence="5">
    <original>P</original>
    <variation>L</variation>
    <location>
        <position position="295"/>
    </location>
</feature>
<feature type="mutagenesis site" description="In re-3; pale interveinal phenotype." evidence="5">
    <original>G</original>
    <variation>R</variation>
    <location>
        <position position="328"/>
    </location>
</feature>
<feature type="sequence conflict" description="In Ref. 4; BAH57071." evidence="9" ref="4">
    <original>G</original>
    <variation>S</variation>
    <location>
        <position position="137"/>
    </location>
</feature>